<gene>
    <name evidence="3" type="primary">RPL37B</name>
    <name type="ordered locus">orf19.667.1</name>
    <name type="ORF">CAALFM_C111360WA</name>
</gene>
<dbReference type="EMBL" id="CP017623">
    <property type="protein sequence ID" value="AOW26761.1"/>
    <property type="molecule type" value="Genomic_DNA"/>
</dbReference>
<dbReference type="RefSeq" id="XP_019330701.1">
    <property type="nucleotide sequence ID" value="XM_019475156.1"/>
</dbReference>
<dbReference type="PDB" id="7PZY">
    <property type="method" value="EM"/>
    <property type="resolution" value="2.32 A"/>
    <property type="chains" value="AK=1-90"/>
</dbReference>
<dbReference type="PDB" id="7Q08">
    <property type="method" value="EM"/>
    <property type="resolution" value="2.56 A"/>
    <property type="chains" value="AK=1-90"/>
</dbReference>
<dbReference type="PDB" id="7Q0F">
    <property type="method" value="EM"/>
    <property type="resolution" value="2.64 A"/>
    <property type="chains" value="AK=1-90"/>
</dbReference>
<dbReference type="PDB" id="7Q0P">
    <property type="method" value="EM"/>
    <property type="resolution" value="2.77 A"/>
    <property type="chains" value="AK=1-90"/>
</dbReference>
<dbReference type="PDB" id="7Q0R">
    <property type="method" value="EM"/>
    <property type="resolution" value="2.67 A"/>
    <property type="chains" value="AK=1-90"/>
</dbReference>
<dbReference type="PDB" id="8C3A">
    <property type="method" value="X-ray"/>
    <property type="resolution" value="3.00 A"/>
    <property type="chains" value="AK/CE=1-87"/>
</dbReference>
<dbReference type="PDB" id="8CQ7">
    <property type="method" value="X-ray"/>
    <property type="resolution" value="3.20 A"/>
    <property type="chains" value="AK/CE=1-90"/>
</dbReference>
<dbReference type="PDB" id="8CQW">
    <property type="method" value="X-ray"/>
    <property type="resolution" value="3.05 A"/>
    <property type="chains" value="AK/CE=1-90"/>
</dbReference>
<dbReference type="PDB" id="8CRE">
    <property type="method" value="X-ray"/>
    <property type="resolution" value="3.00 A"/>
    <property type="chains" value="AK/CE=1-90"/>
</dbReference>
<dbReference type="PDB" id="8OEQ">
    <property type="method" value="X-ray"/>
    <property type="resolution" value="3.30 A"/>
    <property type="chains" value="AK/CE=1-90"/>
</dbReference>
<dbReference type="PDB" id="8OGJ">
    <property type="method" value="EM"/>
    <property type="resolution" value="3.10 A"/>
    <property type="chains" value="AK=1-90"/>
</dbReference>
<dbReference type="PDB" id="8OH6">
    <property type="method" value="X-ray"/>
    <property type="resolution" value="3.35 A"/>
    <property type="chains" value="AK/CE=1-90"/>
</dbReference>
<dbReference type="PDB" id="8OI5">
    <property type="method" value="X-ray"/>
    <property type="resolution" value="2.90 A"/>
    <property type="chains" value="AK/CE=1-90"/>
</dbReference>
<dbReference type="PDB" id="8OJ3">
    <property type="method" value="X-ray"/>
    <property type="resolution" value="3.50 A"/>
    <property type="chains" value="AK/CE=1-90"/>
</dbReference>
<dbReference type="PDB" id="8Q5I">
    <property type="method" value="EM"/>
    <property type="resolution" value="2.45 A"/>
    <property type="chains" value="AK=1-90"/>
</dbReference>
<dbReference type="PDBsum" id="7PZY"/>
<dbReference type="PDBsum" id="7Q08"/>
<dbReference type="PDBsum" id="7Q0F"/>
<dbReference type="PDBsum" id="7Q0P"/>
<dbReference type="PDBsum" id="7Q0R"/>
<dbReference type="PDBsum" id="8C3A"/>
<dbReference type="PDBsum" id="8CQ7"/>
<dbReference type="PDBsum" id="8CQW"/>
<dbReference type="PDBsum" id="8CRE"/>
<dbReference type="PDBsum" id="8OEQ"/>
<dbReference type="PDBsum" id="8OGJ"/>
<dbReference type="PDBsum" id="8OH6"/>
<dbReference type="PDBsum" id="8OI5"/>
<dbReference type="PDBsum" id="8OJ3"/>
<dbReference type="PDBsum" id="8Q5I"/>
<dbReference type="EMDB" id="EMD-13737"/>
<dbReference type="EMDB" id="EMD-13741"/>
<dbReference type="EMDB" id="EMD-13744"/>
<dbReference type="EMDB" id="EMD-13749"/>
<dbReference type="EMDB" id="EMD-13750"/>
<dbReference type="EMDB" id="EMD-16874"/>
<dbReference type="SMR" id="A0A1D8PF45"/>
<dbReference type="FunCoup" id="A0A1D8PF45">
    <property type="interactions" value="591"/>
</dbReference>
<dbReference type="STRING" id="237561.A0A1D8PF45"/>
<dbReference type="EnsemblFungi" id="C1_11360W_A-T">
    <property type="protein sequence ID" value="C1_11360W_A-T-p1"/>
    <property type="gene ID" value="C1_11360W_A"/>
</dbReference>
<dbReference type="GeneID" id="30515053"/>
<dbReference type="KEGG" id="cal:CAALFM_C111360WA"/>
<dbReference type="CGD" id="CAL0000198698">
    <property type="gene designation" value="RPL37B"/>
</dbReference>
<dbReference type="VEuPathDB" id="FungiDB:C1_11360W_A"/>
<dbReference type="eggNOG" id="KOG3475">
    <property type="taxonomic scope" value="Eukaryota"/>
</dbReference>
<dbReference type="InParanoid" id="A0A1D8PF45"/>
<dbReference type="OMA" id="RMAYLKH"/>
<dbReference type="OrthoDB" id="10259236at2759"/>
<dbReference type="Proteomes" id="UP000000559">
    <property type="component" value="Chromosome 1"/>
</dbReference>
<dbReference type="GO" id="GO:0022625">
    <property type="term" value="C:cytosolic large ribosomal subunit"/>
    <property type="evidence" value="ECO:0000318"/>
    <property type="project" value="GO_Central"/>
</dbReference>
<dbReference type="GO" id="GO:0003723">
    <property type="term" value="F:RNA binding"/>
    <property type="evidence" value="ECO:0000318"/>
    <property type="project" value="GO_Central"/>
</dbReference>
<dbReference type="GO" id="GO:0019843">
    <property type="term" value="F:rRNA binding"/>
    <property type="evidence" value="ECO:0007669"/>
    <property type="project" value="UniProtKB-KW"/>
</dbReference>
<dbReference type="GO" id="GO:0003735">
    <property type="term" value="F:structural constituent of ribosome"/>
    <property type="evidence" value="ECO:0007669"/>
    <property type="project" value="InterPro"/>
</dbReference>
<dbReference type="GO" id="GO:0008270">
    <property type="term" value="F:zinc ion binding"/>
    <property type="evidence" value="ECO:0007669"/>
    <property type="project" value="UniProtKB-KW"/>
</dbReference>
<dbReference type="GO" id="GO:0006412">
    <property type="term" value="P:translation"/>
    <property type="evidence" value="ECO:0007669"/>
    <property type="project" value="InterPro"/>
</dbReference>
<dbReference type="FunFam" id="2.20.25.30:FF:000001">
    <property type="entry name" value="Ribosomal protein L37"/>
    <property type="match status" value="1"/>
</dbReference>
<dbReference type="Gene3D" id="2.20.25.30">
    <property type="match status" value="1"/>
</dbReference>
<dbReference type="HAMAP" id="MF_00547">
    <property type="entry name" value="Ribosomal_eL37"/>
    <property type="match status" value="1"/>
</dbReference>
<dbReference type="InterPro" id="IPR001569">
    <property type="entry name" value="Ribosomal_eL37"/>
</dbReference>
<dbReference type="InterPro" id="IPR011331">
    <property type="entry name" value="Ribosomal_eL37/eL43"/>
</dbReference>
<dbReference type="InterPro" id="IPR018267">
    <property type="entry name" value="Ribosomal_eL37_CS"/>
</dbReference>
<dbReference type="InterPro" id="IPR011332">
    <property type="entry name" value="Ribosomal_zn-bd"/>
</dbReference>
<dbReference type="NCBIfam" id="NF003214">
    <property type="entry name" value="PRK04179.1"/>
    <property type="match status" value="1"/>
</dbReference>
<dbReference type="PANTHER" id="PTHR10768">
    <property type="entry name" value="60S RIBOSOMAL PROTEIN L37"/>
    <property type="match status" value="1"/>
</dbReference>
<dbReference type="PANTHER" id="PTHR10768:SF0">
    <property type="entry name" value="RIBOSOMAL PROTEIN L37"/>
    <property type="match status" value="1"/>
</dbReference>
<dbReference type="Pfam" id="PF01907">
    <property type="entry name" value="Ribosomal_L37e"/>
    <property type="match status" value="1"/>
</dbReference>
<dbReference type="SUPFAM" id="SSF57829">
    <property type="entry name" value="Zn-binding ribosomal proteins"/>
    <property type="match status" value="1"/>
</dbReference>
<dbReference type="PROSITE" id="PS01077">
    <property type="entry name" value="RIBOSOMAL_L37E"/>
    <property type="match status" value="1"/>
</dbReference>
<evidence type="ECO:0000255" key="1">
    <source>
        <dbReference type="PROSITE-ProRule" id="PRU00451"/>
    </source>
</evidence>
<evidence type="ECO:0000269" key="2">
    <source>
    </source>
</evidence>
<evidence type="ECO:0000303" key="3">
    <source>
    </source>
</evidence>
<evidence type="ECO:0000305" key="4"/>
<evidence type="ECO:0000305" key="5">
    <source>
    </source>
</evidence>
<evidence type="ECO:0007744" key="6">
    <source>
        <dbReference type="PDB" id="7PZY"/>
    </source>
</evidence>
<evidence type="ECO:0007744" key="7">
    <source>
        <dbReference type="PDB" id="7Q0F"/>
    </source>
</evidence>
<evidence type="ECO:0007744" key="8">
    <source>
        <dbReference type="PDB" id="7Q0P"/>
    </source>
</evidence>
<protein>
    <recommendedName>
        <fullName evidence="3">Large ribosomal subunit protein eL37</fullName>
    </recommendedName>
    <alternativeName>
        <fullName>60S ribosomal protein L37-B</fullName>
    </alternativeName>
</protein>
<comment type="function">
    <text evidence="5">Component of the ribosome, a large ribonucleoprotein complex responsible for the synthesis of proteins in the cell. The small ribosomal subunit (SSU) binds messenger RNAs (mRNAs) and translates the encoded message by selecting cognate aminoacyl-transfer RNA (tRNA) molecules. The large subunit (LSU) contains the ribosomal catalytic site termed the peptidyl transferase center (PTC), which catalyzes the formation of peptide bonds, thereby polymerizing the amino acids delivered by tRNAs into a polypeptide chain. The nascent polypeptides leave the ribosome through a tunnel in the LSU and interact with protein factors that function in enzymatic processing, targeting, and the membrane insertion of nascent chains at the exit of the ribosomal tunnel.</text>
</comment>
<comment type="cofactor">
    <cofactor evidence="2">
        <name>Zn(2+)</name>
        <dbReference type="ChEBI" id="CHEBI:29105"/>
    </cofactor>
</comment>
<comment type="subunit">
    <text evidence="2">Component of the large ribosomal subunit (PubMed:35613268). Mature ribosomes consist of a small (40S) and a large (60S) subunit (PubMed:35613268). The 40S subunit contains about 32 different proteins and 1 molecule of RNA (18S) (PubMed:35613268). The 60S subunit contains 45 different proteins and 3 molecules of RNA (25S, 5.8S and 5S) (PubMed:35613268).</text>
</comment>
<comment type="subcellular location">
    <subcellularLocation>
        <location evidence="5">Cytoplasm</location>
    </subcellularLocation>
</comment>
<comment type="similarity">
    <text evidence="4">Belongs to the eukaryotic ribosomal protein eL37 family.</text>
</comment>
<keyword id="KW-0002">3D-structure</keyword>
<keyword id="KW-0963">Cytoplasm</keyword>
<keyword id="KW-0479">Metal-binding</keyword>
<keyword id="KW-1185">Reference proteome</keyword>
<keyword id="KW-0687">Ribonucleoprotein</keyword>
<keyword id="KW-0689">Ribosomal protein</keyword>
<keyword id="KW-0694">RNA-binding</keyword>
<keyword id="KW-0699">rRNA-binding</keyword>
<keyword id="KW-0862">Zinc</keyword>
<keyword id="KW-0863">Zinc-finger</keyword>
<sequence>MGKGTPSLGKRHNKSHTLCNRCGRRSFHVQKKTCSSCGYPAAKMRSHNWALKAKRRRTTGTGRMAYLKHVTRRFKNGFQTGVAKAQTPSA</sequence>
<reference key="1">
    <citation type="journal article" date="2004" name="Proc. Natl. Acad. Sci. U.S.A.">
        <title>The diploid genome sequence of Candida albicans.</title>
        <authorList>
            <person name="Jones T."/>
            <person name="Federspiel N.A."/>
            <person name="Chibana H."/>
            <person name="Dungan J."/>
            <person name="Kalman S."/>
            <person name="Magee B.B."/>
            <person name="Newport G."/>
            <person name="Thorstenson Y.R."/>
            <person name="Agabian N."/>
            <person name="Magee P.T."/>
            <person name="Davis R.W."/>
            <person name="Scherer S."/>
        </authorList>
    </citation>
    <scope>NUCLEOTIDE SEQUENCE [LARGE SCALE GENOMIC DNA]</scope>
    <source>
        <strain>SC5314 / ATCC MYA-2876</strain>
    </source>
</reference>
<reference key="2">
    <citation type="journal article" date="2007" name="Genome Biol.">
        <title>Assembly of the Candida albicans genome into sixteen supercontigs aligned on the eight chromosomes.</title>
        <authorList>
            <person name="van het Hoog M."/>
            <person name="Rast T.J."/>
            <person name="Martchenko M."/>
            <person name="Grindle S."/>
            <person name="Dignard D."/>
            <person name="Hogues H."/>
            <person name="Cuomo C."/>
            <person name="Berriman M."/>
            <person name="Scherer S."/>
            <person name="Magee B.B."/>
            <person name="Whiteway M."/>
            <person name="Chibana H."/>
            <person name="Nantel A."/>
            <person name="Magee P.T."/>
        </authorList>
    </citation>
    <scope>GENOME REANNOTATION</scope>
    <source>
        <strain>SC5314 / ATCC MYA-2876</strain>
    </source>
</reference>
<reference key="3">
    <citation type="journal article" date="2013" name="Genome Biol.">
        <title>Assembly of a phased diploid Candida albicans genome facilitates allele-specific measurements and provides a simple model for repeat and indel structure.</title>
        <authorList>
            <person name="Muzzey D."/>
            <person name="Schwartz K."/>
            <person name="Weissman J.S."/>
            <person name="Sherlock G."/>
        </authorList>
    </citation>
    <scope>NUCLEOTIDE SEQUENCE [LARGE SCALE GENOMIC DNA]</scope>
    <scope>GENOME REANNOTATION</scope>
    <source>
        <strain>SC5314 / ATCC MYA-2876</strain>
    </source>
</reference>
<reference evidence="6 7 8" key="4">
    <citation type="journal article" date="2022" name="Sci. Adv.">
        <title>E-site drug specificity of the human pathogen Candida albicans ribosome.</title>
        <authorList>
            <person name="Zgadzay Y."/>
            <person name="Kolosova O."/>
            <person name="Stetsenko A."/>
            <person name="Wu C."/>
            <person name="Bruchlen D."/>
            <person name="Usachev K."/>
            <person name="Validov S."/>
            <person name="Jenner L."/>
            <person name="Rogachev A."/>
            <person name="Yusupova G."/>
            <person name="Sachs M.S."/>
            <person name="Guskov A."/>
            <person name="Yusupov M."/>
        </authorList>
    </citation>
    <scope>STRUCTURE BY ELECTRON MICROSCOPY (2.32 ANGSTROMS) OF THE 80S RIBOSOME</scope>
    <scope>SUBUNIT</scope>
    <scope>COFACTOR</scope>
</reference>
<accession>A0A1D8PF45</accession>
<organism>
    <name type="scientific">Candida albicans (strain SC5314 / ATCC MYA-2876)</name>
    <name type="common">Yeast</name>
    <dbReference type="NCBI Taxonomy" id="237561"/>
    <lineage>
        <taxon>Eukaryota</taxon>
        <taxon>Fungi</taxon>
        <taxon>Dikarya</taxon>
        <taxon>Ascomycota</taxon>
        <taxon>Saccharomycotina</taxon>
        <taxon>Pichiomycetes</taxon>
        <taxon>Debaryomycetaceae</taxon>
        <taxon>Candida/Lodderomyces clade</taxon>
        <taxon>Candida</taxon>
    </lineage>
</organism>
<feature type="chain" id="PRO_0000456641" description="Large ribosomal subunit protein eL37">
    <location>
        <begin position="1"/>
        <end position="90"/>
    </location>
</feature>
<feature type="zinc finger region" description="A20-type" evidence="1">
    <location>
        <begin position="13"/>
        <end position="46"/>
    </location>
</feature>
<feature type="binding site" evidence="1 2 6">
    <location>
        <position position="19"/>
    </location>
    <ligand>
        <name>Zn(2+)</name>
        <dbReference type="ChEBI" id="CHEBI:29105"/>
        <label>101</label>
    </ligand>
</feature>
<feature type="binding site" evidence="1 2 6">
    <location>
        <position position="22"/>
    </location>
    <ligand>
        <name>Zn(2+)</name>
        <dbReference type="ChEBI" id="CHEBI:29105"/>
        <label>101</label>
    </ligand>
</feature>
<feature type="binding site" evidence="1 2 6">
    <location>
        <position position="34"/>
    </location>
    <ligand>
        <name>Zn(2+)</name>
        <dbReference type="ChEBI" id="CHEBI:29105"/>
        <label>101</label>
    </ligand>
</feature>
<feature type="binding site" evidence="1 2 6">
    <location>
        <position position="37"/>
    </location>
    <ligand>
        <name>Zn(2+)</name>
        <dbReference type="ChEBI" id="CHEBI:29105"/>
        <label>101</label>
    </ligand>
</feature>
<name>RL37B_CANAL</name>
<proteinExistence type="evidence at protein level"/>